<evidence type="ECO:0000250" key="1"/>
<evidence type="ECO:0000305" key="2"/>
<sequence>MNNLELTYKCETDTTRPFLKSLPVGFEPVEVDDYYISLKEQVRAMQDHCNEEFTKKMQTEGKNDVPEEKPIIL</sequence>
<proteinExistence type="inferred from homology"/>
<keyword id="KW-0010">Activator</keyword>
<keyword id="KW-0158">Chromosome</keyword>
<keyword id="KW-0539">Nucleus</keyword>
<keyword id="KW-1185">Reference proteome</keyword>
<keyword id="KW-0779">Telomere</keyword>
<keyword id="KW-0804">Transcription</keyword>
<keyword id="KW-0805">Transcription regulation</keyword>
<keyword id="KW-0819">tRNA processing</keyword>
<feature type="chain" id="PRO_0000303984" description="EKC/KEOPS complex subunit gon7">
    <location>
        <begin position="1"/>
        <end position="73"/>
    </location>
</feature>
<accession>A6X972</accession>
<protein>
    <recommendedName>
        <fullName>EKC/KEOPS complex subunit gon7</fullName>
    </recommendedName>
</protein>
<name>GON7_SCHPO</name>
<reference key="1">
    <citation type="journal article" date="2002" name="Nature">
        <title>The genome sequence of Schizosaccharomyces pombe.</title>
        <authorList>
            <person name="Wood V."/>
            <person name="Gwilliam R."/>
            <person name="Rajandream M.A."/>
            <person name="Lyne M.H."/>
            <person name="Lyne R."/>
            <person name="Stewart A."/>
            <person name="Sgouros J.G."/>
            <person name="Peat N."/>
            <person name="Hayles J."/>
            <person name="Baker S.G."/>
            <person name="Basham D."/>
            <person name="Bowman S."/>
            <person name="Brooks K."/>
            <person name="Brown D."/>
            <person name="Brown S."/>
            <person name="Chillingworth T."/>
            <person name="Churcher C.M."/>
            <person name="Collins M."/>
            <person name="Connor R."/>
            <person name="Cronin A."/>
            <person name="Davis P."/>
            <person name="Feltwell T."/>
            <person name="Fraser A."/>
            <person name="Gentles S."/>
            <person name="Goble A."/>
            <person name="Hamlin N."/>
            <person name="Harris D.E."/>
            <person name="Hidalgo J."/>
            <person name="Hodgson G."/>
            <person name="Holroyd S."/>
            <person name="Hornsby T."/>
            <person name="Howarth S."/>
            <person name="Huckle E.J."/>
            <person name="Hunt S."/>
            <person name="Jagels K."/>
            <person name="James K.D."/>
            <person name="Jones L."/>
            <person name="Jones M."/>
            <person name="Leather S."/>
            <person name="McDonald S."/>
            <person name="McLean J."/>
            <person name="Mooney P."/>
            <person name="Moule S."/>
            <person name="Mungall K.L."/>
            <person name="Murphy L.D."/>
            <person name="Niblett D."/>
            <person name="Odell C."/>
            <person name="Oliver K."/>
            <person name="O'Neil S."/>
            <person name="Pearson D."/>
            <person name="Quail M.A."/>
            <person name="Rabbinowitsch E."/>
            <person name="Rutherford K.M."/>
            <person name="Rutter S."/>
            <person name="Saunders D."/>
            <person name="Seeger K."/>
            <person name="Sharp S."/>
            <person name="Skelton J."/>
            <person name="Simmonds M.N."/>
            <person name="Squares R."/>
            <person name="Squares S."/>
            <person name="Stevens K."/>
            <person name="Taylor K."/>
            <person name="Taylor R.G."/>
            <person name="Tivey A."/>
            <person name="Walsh S.V."/>
            <person name="Warren T."/>
            <person name="Whitehead S."/>
            <person name="Woodward J.R."/>
            <person name="Volckaert G."/>
            <person name="Aert R."/>
            <person name="Robben J."/>
            <person name="Grymonprez B."/>
            <person name="Weltjens I."/>
            <person name="Vanstreels E."/>
            <person name="Rieger M."/>
            <person name="Schaefer M."/>
            <person name="Mueller-Auer S."/>
            <person name="Gabel C."/>
            <person name="Fuchs M."/>
            <person name="Duesterhoeft A."/>
            <person name="Fritzc C."/>
            <person name="Holzer E."/>
            <person name="Moestl D."/>
            <person name="Hilbert H."/>
            <person name="Borzym K."/>
            <person name="Langer I."/>
            <person name="Beck A."/>
            <person name="Lehrach H."/>
            <person name="Reinhardt R."/>
            <person name="Pohl T.M."/>
            <person name="Eger P."/>
            <person name="Zimmermann W."/>
            <person name="Wedler H."/>
            <person name="Wambutt R."/>
            <person name="Purnelle B."/>
            <person name="Goffeau A."/>
            <person name="Cadieu E."/>
            <person name="Dreano S."/>
            <person name="Gloux S."/>
            <person name="Lelaure V."/>
            <person name="Mottier S."/>
            <person name="Galibert F."/>
            <person name="Aves S.J."/>
            <person name="Xiang Z."/>
            <person name="Hunt C."/>
            <person name="Moore K."/>
            <person name="Hurst S.M."/>
            <person name="Lucas M."/>
            <person name="Rochet M."/>
            <person name="Gaillardin C."/>
            <person name="Tallada V.A."/>
            <person name="Garzon A."/>
            <person name="Thode G."/>
            <person name="Daga R.R."/>
            <person name="Cruzado L."/>
            <person name="Jimenez J."/>
            <person name="Sanchez M."/>
            <person name="del Rey F."/>
            <person name="Benito J."/>
            <person name="Dominguez A."/>
            <person name="Revuelta J.L."/>
            <person name="Moreno S."/>
            <person name="Armstrong J."/>
            <person name="Forsburg S.L."/>
            <person name="Cerutti L."/>
            <person name="Lowe T."/>
            <person name="McCombie W.R."/>
            <person name="Paulsen I."/>
            <person name="Potashkin J."/>
            <person name="Shpakovski G.V."/>
            <person name="Ussery D."/>
            <person name="Barrell B.G."/>
            <person name="Nurse P."/>
        </authorList>
    </citation>
    <scope>NUCLEOTIDE SEQUENCE [LARGE SCALE GENOMIC DNA]</scope>
    <source>
        <strain>972 / ATCC 24843</strain>
    </source>
</reference>
<gene>
    <name type="primary">gon7</name>
    <name type="ORF">SPAC6B12.18</name>
</gene>
<organism>
    <name type="scientific">Schizosaccharomyces pombe (strain 972 / ATCC 24843)</name>
    <name type="common">Fission yeast</name>
    <dbReference type="NCBI Taxonomy" id="284812"/>
    <lineage>
        <taxon>Eukaryota</taxon>
        <taxon>Fungi</taxon>
        <taxon>Dikarya</taxon>
        <taxon>Ascomycota</taxon>
        <taxon>Taphrinomycotina</taxon>
        <taxon>Schizosaccharomycetes</taxon>
        <taxon>Schizosaccharomycetales</taxon>
        <taxon>Schizosaccharomycetaceae</taxon>
        <taxon>Schizosaccharomyces</taxon>
    </lineage>
</organism>
<comment type="function">
    <text evidence="1">Component of the EKC/KEOPS complex that is required for the formation of a threonylcarbamoyl group on adenosine at position 37 (t(6)A37) in tRNAs that read codons beginning with adenine. The complex is probably involved in the transfer of the threonylcarbamoyl moiety of threonylcarbamoyl-AMP (TC-AMP) to the N6 group of A37. Gon7 likely plays a supporting role to the catalytic subunit pgp2 in the complex. The EKC/KEOPS complex also promotes both telomere uncapping and telomere elongation. The complex is required for efficient recruitment of transcriptional coactivators (By similarity).</text>
</comment>
<comment type="subunit">
    <text evidence="1">Component of the EKC/KEOPS complex composed of at least SPAP27G11.07c/BUD32, cgi121, gon7, pgp2 and SPAC4H3.13/PCC1; the whole complex dimerizes.</text>
</comment>
<comment type="subcellular location">
    <subcellularLocation>
        <location evidence="1">Nucleus</location>
    </subcellularLocation>
    <subcellularLocation>
        <location evidence="1">Chromosome</location>
        <location evidence="1">Telomere</location>
    </subcellularLocation>
</comment>
<comment type="similarity">
    <text evidence="2">Belongs to the GON7 family.</text>
</comment>
<dbReference type="EMBL" id="CU329670">
    <property type="protein sequence ID" value="CAO77639.1"/>
    <property type="molecule type" value="Genomic_DNA"/>
</dbReference>
<dbReference type="RefSeq" id="XP_001713066.1">
    <property type="nucleotide sequence ID" value="XM_001713014.2"/>
</dbReference>
<dbReference type="SMR" id="A6X972"/>
<dbReference type="BioGRID" id="858027">
    <property type="interactions" value="5"/>
</dbReference>
<dbReference type="STRING" id="284812.A6X972"/>
<dbReference type="iPTMnet" id="A6X972"/>
<dbReference type="PaxDb" id="4896-SPAC6B12.18.1"/>
<dbReference type="EnsemblFungi" id="SPAC6B12.18.1">
    <property type="protein sequence ID" value="SPAC6B12.18.1:pep"/>
    <property type="gene ID" value="SPAC6B12.18"/>
</dbReference>
<dbReference type="PomBase" id="SPAC6B12.18">
    <property type="gene designation" value="gon7"/>
</dbReference>
<dbReference type="VEuPathDB" id="FungiDB:SPAC6B12.18"/>
<dbReference type="HOGENOM" id="CLU_201359_0_0_1"/>
<dbReference type="InParanoid" id="A6X972"/>
<dbReference type="OMA" id="ELTYKCE"/>
<dbReference type="PRO" id="PR:A6X972"/>
<dbReference type="Proteomes" id="UP000002485">
    <property type="component" value="Chromosome I"/>
</dbReference>
<dbReference type="GO" id="GO:0000781">
    <property type="term" value="C:chromosome, telomeric region"/>
    <property type="evidence" value="ECO:0007669"/>
    <property type="project" value="UniProtKB-SubCell"/>
</dbReference>
<dbReference type="GO" id="GO:0000408">
    <property type="term" value="C:EKC/KEOPS complex"/>
    <property type="evidence" value="ECO:0000266"/>
    <property type="project" value="PomBase"/>
</dbReference>
<dbReference type="GO" id="GO:0005634">
    <property type="term" value="C:nucleus"/>
    <property type="evidence" value="ECO:0007669"/>
    <property type="project" value="UniProtKB-SubCell"/>
</dbReference>
<dbReference type="GO" id="GO:0002949">
    <property type="term" value="P:tRNA threonylcarbamoyladenosine modification"/>
    <property type="evidence" value="ECO:0000305"/>
    <property type="project" value="PomBase"/>
</dbReference>